<proteinExistence type="evidence at protein level"/>
<feature type="chain" id="PRO_0000049997" description="Polyisoprenyl-teichoic acid--peptidoglycan teichoic acid transferase TagT">
    <location>
        <begin position="1"/>
        <end position="322"/>
    </location>
</feature>
<feature type="topological domain" description="Cytoplasmic" evidence="4">
    <location>
        <begin position="1"/>
        <end position="19"/>
    </location>
</feature>
<feature type="transmembrane region" description="Helical; Signal-anchor for type II membrane protein" evidence="1">
    <location>
        <begin position="20"/>
        <end position="40"/>
    </location>
</feature>
<feature type="topological domain" description="Extracellular" evidence="4">
    <location>
        <begin position="41"/>
        <end position="322"/>
    </location>
</feature>
<feature type="turn" evidence="8">
    <location>
        <begin position="69"/>
        <end position="71"/>
    </location>
</feature>
<feature type="strand" evidence="8">
    <location>
        <begin position="74"/>
        <end position="81"/>
    </location>
</feature>
<feature type="strand" evidence="8">
    <location>
        <begin position="96"/>
        <end position="105"/>
    </location>
</feature>
<feature type="turn" evidence="8">
    <location>
        <begin position="106"/>
        <end position="109"/>
    </location>
</feature>
<feature type="strand" evidence="8">
    <location>
        <begin position="110"/>
        <end position="115"/>
    </location>
</feature>
<feature type="strand" evidence="8">
    <location>
        <begin position="120"/>
        <end position="124"/>
    </location>
</feature>
<feature type="turn" evidence="8">
    <location>
        <begin position="125"/>
        <end position="127"/>
    </location>
</feature>
<feature type="strand" evidence="8">
    <location>
        <begin position="128"/>
        <end position="131"/>
    </location>
</feature>
<feature type="helix" evidence="8">
    <location>
        <begin position="134"/>
        <end position="152"/>
    </location>
</feature>
<feature type="strand" evidence="8">
    <location>
        <begin position="158"/>
        <end position="162"/>
    </location>
</feature>
<feature type="helix" evidence="8">
    <location>
        <begin position="164"/>
        <end position="173"/>
    </location>
</feature>
<feature type="strand" evidence="8">
    <location>
        <begin position="177"/>
        <end position="181"/>
    </location>
</feature>
<feature type="helix" evidence="8">
    <location>
        <begin position="184"/>
        <end position="193"/>
    </location>
</feature>
<feature type="turn" evidence="8">
    <location>
        <begin position="194"/>
        <end position="196"/>
    </location>
</feature>
<feature type="strand" evidence="8">
    <location>
        <begin position="202"/>
        <end position="207"/>
    </location>
</feature>
<feature type="helix" evidence="8">
    <location>
        <begin position="209"/>
        <end position="217"/>
    </location>
</feature>
<feature type="strand" evidence="8">
    <location>
        <begin position="220"/>
        <end position="222"/>
    </location>
</feature>
<feature type="helix" evidence="8">
    <location>
        <begin position="225"/>
        <end position="242"/>
    </location>
</feature>
<feature type="turn" evidence="8">
    <location>
        <begin position="257"/>
        <end position="260"/>
    </location>
</feature>
<feature type="strand" evidence="8">
    <location>
        <begin position="261"/>
        <end position="266"/>
    </location>
</feature>
<feature type="helix" evidence="8">
    <location>
        <begin position="268"/>
        <end position="278"/>
    </location>
</feature>
<feature type="strand" evidence="8">
    <location>
        <begin position="282"/>
        <end position="287"/>
    </location>
</feature>
<feature type="strand" evidence="8">
    <location>
        <begin position="291"/>
        <end position="294"/>
    </location>
</feature>
<feature type="strand" evidence="7">
    <location>
        <begin position="296"/>
        <end position="298"/>
    </location>
</feature>
<feature type="strand" evidence="8">
    <location>
        <begin position="301"/>
        <end position="304"/>
    </location>
</feature>
<feature type="helix" evidence="8">
    <location>
        <begin position="306"/>
        <end position="319"/>
    </location>
</feature>
<organism>
    <name type="scientific">Bacillus subtilis (strain 168)</name>
    <dbReference type="NCBI Taxonomy" id="224308"/>
    <lineage>
        <taxon>Bacteria</taxon>
        <taxon>Bacillati</taxon>
        <taxon>Bacillota</taxon>
        <taxon>Bacilli</taxon>
        <taxon>Bacillales</taxon>
        <taxon>Bacillaceae</taxon>
        <taxon>Bacillus</taxon>
    </lineage>
</organism>
<gene>
    <name evidence="3" type="primary">tagT</name>
    <name type="synonym">ywtF</name>
    <name type="ordered locus">BSU35840</name>
</gene>
<reference key="1">
    <citation type="journal article" date="1997" name="Nature">
        <title>The complete genome sequence of the Gram-positive bacterium Bacillus subtilis.</title>
        <authorList>
            <person name="Kunst F."/>
            <person name="Ogasawara N."/>
            <person name="Moszer I."/>
            <person name="Albertini A.M."/>
            <person name="Alloni G."/>
            <person name="Azevedo V."/>
            <person name="Bertero M.G."/>
            <person name="Bessieres P."/>
            <person name="Bolotin A."/>
            <person name="Borchert S."/>
            <person name="Borriss R."/>
            <person name="Boursier L."/>
            <person name="Brans A."/>
            <person name="Braun M."/>
            <person name="Brignell S.C."/>
            <person name="Bron S."/>
            <person name="Brouillet S."/>
            <person name="Bruschi C.V."/>
            <person name="Caldwell B."/>
            <person name="Capuano V."/>
            <person name="Carter N.M."/>
            <person name="Choi S.-K."/>
            <person name="Codani J.-J."/>
            <person name="Connerton I.F."/>
            <person name="Cummings N.J."/>
            <person name="Daniel R.A."/>
            <person name="Denizot F."/>
            <person name="Devine K.M."/>
            <person name="Duesterhoeft A."/>
            <person name="Ehrlich S.D."/>
            <person name="Emmerson P.T."/>
            <person name="Entian K.-D."/>
            <person name="Errington J."/>
            <person name="Fabret C."/>
            <person name="Ferrari E."/>
            <person name="Foulger D."/>
            <person name="Fritz C."/>
            <person name="Fujita M."/>
            <person name="Fujita Y."/>
            <person name="Fuma S."/>
            <person name="Galizzi A."/>
            <person name="Galleron N."/>
            <person name="Ghim S.-Y."/>
            <person name="Glaser P."/>
            <person name="Goffeau A."/>
            <person name="Golightly E.J."/>
            <person name="Grandi G."/>
            <person name="Guiseppi G."/>
            <person name="Guy B.J."/>
            <person name="Haga K."/>
            <person name="Haiech J."/>
            <person name="Harwood C.R."/>
            <person name="Henaut A."/>
            <person name="Hilbert H."/>
            <person name="Holsappel S."/>
            <person name="Hosono S."/>
            <person name="Hullo M.-F."/>
            <person name="Itaya M."/>
            <person name="Jones L.-M."/>
            <person name="Joris B."/>
            <person name="Karamata D."/>
            <person name="Kasahara Y."/>
            <person name="Klaerr-Blanchard M."/>
            <person name="Klein C."/>
            <person name="Kobayashi Y."/>
            <person name="Koetter P."/>
            <person name="Koningstein G."/>
            <person name="Krogh S."/>
            <person name="Kumano M."/>
            <person name="Kurita K."/>
            <person name="Lapidus A."/>
            <person name="Lardinois S."/>
            <person name="Lauber J."/>
            <person name="Lazarevic V."/>
            <person name="Lee S.-M."/>
            <person name="Levine A."/>
            <person name="Liu H."/>
            <person name="Masuda S."/>
            <person name="Mauel C."/>
            <person name="Medigue C."/>
            <person name="Medina N."/>
            <person name="Mellado R.P."/>
            <person name="Mizuno M."/>
            <person name="Moestl D."/>
            <person name="Nakai S."/>
            <person name="Noback M."/>
            <person name="Noone D."/>
            <person name="O'Reilly M."/>
            <person name="Ogawa K."/>
            <person name="Ogiwara A."/>
            <person name="Oudega B."/>
            <person name="Park S.-H."/>
            <person name="Parro V."/>
            <person name="Pohl T.M."/>
            <person name="Portetelle D."/>
            <person name="Porwollik S."/>
            <person name="Prescott A.M."/>
            <person name="Presecan E."/>
            <person name="Pujic P."/>
            <person name="Purnelle B."/>
            <person name="Rapoport G."/>
            <person name="Rey M."/>
            <person name="Reynolds S."/>
            <person name="Rieger M."/>
            <person name="Rivolta C."/>
            <person name="Rocha E."/>
            <person name="Roche B."/>
            <person name="Rose M."/>
            <person name="Sadaie Y."/>
            <person name="Sato T."/>
            <person name="Scanlan E."/>
            <person name="Schleich S."/>
            <person name="Schroeter R."/>
            <person name="Scoffone F."/>
            <person name="Sekiguchi J."/>
            <person name="Sekowska A."/>
            <person name="Seror S.J."/>
            <person name="Serror P."/>
            <person name="Shin B.-S."/>
            <person name="Soldo B."/>
            <person name="Sorokin A."/>
            <person name="Tacconi E."/>
            <person name="Takagi T."/>
            <person name="Takahashi H."/>
            <person name="Takemaru K."/>
            <person name="Takeuchi M."/>
            <person name="Tamakoshi A."/>
            <person name="Tanaka T."/>
            <person name="Terpstra P."/>
            <person name="Tognoni A."/>
            <person name="Tosato V."/>
            <person name="Uchiyama S."/>
            <person name="Vandenbol M."/>
            <person name="Vannier F."/>
            <person name="Vassarotti A."/>
            <person name="Viari A."/>
            <person name="Wambutt R."/>
            <person name="Wedler E."/>
            <person name="Wedler H."/>
            <person name="Weitzenegger T."/>
            <person name="Winters P."/>
            <person name="Wipat A."/>
            <person name="Yamamoto H."/>
            <person name="Yamane K."/>
            <person name="Yasumoto K."/>
            <person name="Yata K."/>
            <person name="Yoshida K."/>
            <person name="Yoshikawa H.-F."/>
            <person name="Zumstein E."/>
            <person name="Yoshikawa H."/>
            <person name="Danchin A."/>
        </authorList>
    </citation>
    <scope>NUCLEOTIDE SEQUENCE [LARGE SCALE GENOMIC DNA]</scope>
    <source>
        <strain>168</strain>
    </source>
</reference>
<reference key="2">
    <citation type="journal article" date="1999" name="Genome Res.">
        <title>Detecting and analyzing DNA sequencing errors: toward a higher quality of the Bacillus subtilis genome sequence.</title>
        <authorList>
            <person name="Medigue C."/>
            <person name="Rose M."/>
            <person name="Viari A."/>
            <person name="Danchin A."/>
        </authorList>
    </citation>
    <scope>SEQUENCE REVISION</scope>
</reference>
<reference key="3">
    <citation type="journal article" date="2009" name="Microbiology">
        <title>From a consortium sequence to a unified sequence: the Bacillus subtilis 168 reference genome a decade later.</title>
        <authorList>
            <person name="Barbe V."/>
            <person name="Cruveiller S."/>
            <person name="Kunst F."/>
            <person name="Lenoble P."/>
            <person name="Meurice G."/>
            <person name="Sekowska A."/>
            <person name="Vallenet D."/>
            <person name="Wang T."/>
            <person name="Moszer I."/>
            <person name="Medigue C."/>
            <person name="Danchin A."/>
        </authorList>
    </citation>
    <scope>SEQUENCE REVISION TO 226</scope>
</reference>
<reference key="4">
    <citation type="journal article" date="2011" name="EMBO J.">
        <title>A widespread family of bacterial cell wall assembly proteins.</title>
        <authorList>
            <person name="Kawai Y."/>
            <person name="Marles-Wright J."/>
            <person name="Cleverley R.M."/>
            <person name="Emmins R."/>
            <person name="Ishikawa S."/>
            <person name="Kuwano M."/>
            <person name="Heinz N."/>
            <person name="Bui N.K."/>
            <person name="Hoyland C.N."/>
            <person name="Ogasawara N."/>
            <person name="Lewis R.J."/>
            <person name="Vollmer W."/>
            <person name="Daniel R.A."/>
            <person name="Errington J."/>
        </authorList>
    </citation>
    <scope>FUNCTION</scope>
    <scope>PATHWAY</scope>
    <scope>INTERACTION WITH MREB</scope>
    <scope>DISRUPTION PHENOTYPE</scope>
</reference>
<reference evidence="5" key="5">
    <citation type="submission" date="2010-03" db="PDB data bank">
        <title>Northeast structural genomics consortium target SR736.</title>
        <authorList>
            <person name="Kuzin A."/>
            <person name="Su M."/>
            <person name="Seetharaman J."/>
            <person name="Mao M."/>
            <person name="Xiao R."/>
            <person name="Ciccosanti C."/>
            <person name="Lee D."/>
            <person name="Everett J.K."/>
            <person name="Nair R."/>
            <person name="Acton T.B."/>
            <person name="Rost B."/>
            <person name="Montelione G.T."/>
            <person name="Hunt J.F."/>
            <person name="Tong L."/>
        </authorList>
    </citation>
    <scope>X-RAY CRYSTALLOGRAPHY (2.49 ANGSTROMS) OF 46-322</scope>
</reference>
<reference evidence="6" key="6">
    <citation type="journal article" date="2012" name="Microb. Drug Resist.">
        <title>Attachment of capsular polysaccharide to the cell wall in Streptococcus pneumoniae.</title>
        <authorList>
            <person name="Eberhardt A."/>
            <person name="Hoyland C.N."/>
            <person name="Vollmer D."/>
            <person name="Bisle S."/>
            <person name="Cleverley R.M."/>
            <person name="Johnsborg O."/>
            <person name="Havarstein L.S."/>
            <person name="Lewis R.J."/>
            <person name="Vollmer W."/>
        </authorList>
    </citation>
    <scope>X-RAY CRYSTALLOGRAPHY (1.79 ANGSTROMS) OF 46-322 IN COMPLEX WITH OCTAPRENYL PYROPHOSPHATE LIPID</scope>
    <source>
        <strain>168</strain>
    </source>
</reference>
<sequence>MEERSQRRKKKRKLKKWVKVVAGLMAFLVIAAGSVGAYAFVKLNNASKEAHVSLARGEQSVKRIKEFDPGKDSFSVLLLGIDAREKNGETVDQARSDANVLVTFNRKEKTAKMLSIPRDAYVNIPGHGYDKFTHAHAYGGVDLTVKTVEEMLDIPVDYVVESNFTAFEDVVNELNGVKVTVKSDKVIQQIKKDTKGKVVLQKGTHTLDGEEALAYVRTRKADSDLLRGQRQMEVLSAIIDKSKSLSSIPAYDDIVDTMGQNLKMNLSLKDAIGLFPFITSLKSVESIQLTGYDYEPAGVYYFKLNQQKLQEVKKELQNDLGV</sequence>
<protein>
    <recommendedName>
        <fullName evidence="4">Polyisoprenyl-teichoic acid--peptidoglycan teichoic acid transferase TagT</fullName>
        <ecNumber evidence="2">2.7.8.-</ecNumber>
    </recommendedName>
</protein>
<accession>Q7WY78</accession>
<name>TAGT_BACSU</name>
<dbReference type="EC" id="2.7.8.-" evidence="2"/>
<dbReference type="EMBL" id="AL009126">
    <property type="protein sequence ID" value="CAB15601.3"/>
    <property type="molecule type" value="Genomic_DNA"/>
</dbReference>
<dbReference type="RefSeq" id="NP_391465.2">
    <property type="nucleotide sequence ID" value="NC_000964.3"/>
</dbReference>
<dbReference type="RefSeq" id="WP_003243404.1">
    <property type="nucleotide sequence ID" value="NZ_OZ025638.1"/>
</dbReference>
<dbReference type="PDB" id="3MEJ">
    <property type="method" value="X-ray"/>
    <property type="resolution" value="2.49 A"/>
    <property type="chains" value="A=46-322"/>
</dbReference>
<dbReference type="PDB" id="4DE9">
    <property type="method" value="X-ray"/>
    <property type="resolution" value="1.79 A"/>
    <property type="chains" value="A=46-322"/>
</dbReference>
<dbReference type="PDB" id="6MPS">
    <property type="method" value="X-ray"/>
    <property type="resolution" value="1.86 A"/>
    <property type="chains" value="A=46-322"/>
</dbReference>
<dbReference type="PDB" id="6MPT">
    <property type="method" value="X-ray"/>
    <property type="resolution" value="1.65 A"/>
    <property type="chains" value="A=46-322"/>
</dbReference>
<dbReference type="PDB" id="6UF5">
    <property type="method" value="X-ray"/>
    <property type="resolution" value="2.80 A"/>
    <property type="chains" value="A=46-322"/>
</dbReference>
<dbReference type="PDBsum" id="3MEJ"/>
<dbReference type="PDBsum" id="4DE9"/>
<dbReference type="PDBsum" id="6MPS"/>
<dbReference type="PDBsum" id="6MPT"/>
<dbReference type="PDBsum" id="6UF5"/>
<dbReference type="SMR" id="Q7WY78"/>
<dbReference type="FunCoup" id="Q7WY78">
    <property type="interactions" value="128"/>
</dbReference>
<dbReference type="STRING" id="224308.BSU35840"/>
<dbReference type="PaxDb" id="224308-BSU35840"/>
<dbReference type="DNASU" id="936823"/>
<dbReference type="EnsemblBacteria" id="CAB15601">
    <property type="protein sequence ID" value="CAB15601"/>
    <property type="gene ID" value="BSU_35840"/>
</dbReference>
<dbReference type="GeneID" id="936823"/>
<dbReference type="KEGG" id="bsu:BSU35840"/>
<dbReference type="PATRIC" id="fig|224308.179.peg.3880"/>
<dbReference type="eggNOG" id="COG1316">
    <property type="taxonomic scope" value="Bacteria"/>
</dbReference>
<dbReference type="InParanoid" id="Q7WY78"/>
<dbReference type="OrthoDB" id="27330at2"/>
<dbReference type="PhylomeDB" id="Q7WY78"/>
<dbReference type="BioCyc" id="BSUB:BSU35840-MONOMER"/>
<dbReference type="BioCyc" id="MetaCyc:BSU35840-MONOMER"/>
<dbReference type="EvolutionaryTrace" id="Q7WY78"/>
<dbReference type="Proteomes" id="UP000001570">
    <property type="component" value="Chromosome"/>
</dbReference>
<dbReference type="GO" id="GO:0005886">
    <property type="term" value="C:plasma membrane"/>
    <property type="evidence" value="ECO:0007669"/>
    <property type="project" value="UniProtKB-SubCell"/>
</dbReference>
<dbReference type="GO" id="GO:0016740">
    <property type="term" value="F:transferase activity"/>
    <property type="evidence" value="ECO:0007669"/>
    <property type="project" value="UniProtKB-KW"/>
</dbReference>
<dbReference type="GO" id="GO:0071555">
    <property type="term" value="P:cell wall organization"/>
    <property type="evidence" value="ECO:0007669"/>
    <property type="project" value="UniProtKB-KW"/>
</dbReference>
<dbReference type="Gene3D" id="3.30.420.590">
    <property type="match status" value="1"/>
</dbReference>
<dbReference type="Gene3D" id="3.40.630.190">
    <property type="entry name" value="LCP protein"/>
    <property type="match status" value="1"/>
</dbReference>
<dbReference type="InterPro" id="IPR050922">
    <property type="entry name" value="LytR/CpsA/Psr_CW_biosynth"/>
</dbReference>
<dbReference type="InterPro" id="IPR004474">
    <property type="entry name" value="LytR_CpsA_psr"/>
</dbReference>
<dbReference type="NCBIfam" id="TIGR00350">
    <property type="entry name" value="lytR_cpsA_psr"/>
    <property type="match status" value="1"/>
</dbReference>
<dbReference type="PANTHER" id="PTHR33392:SF3">
    <property type="entry name" value="POLYISOPRENYL-TEICHOIC ACID--PEPTIDOGLYCAN TEICHOIC ACID TRANSFERASE TAGT"/>
    <property type="match status" value="1"/>
</dbReference>
<dbReference type="PANTHER" id="PTHR33392">
    <property type="entry name" value="POLYISOPRENYL-TEICHOIC ACID--PEPTIDOGLYCAN TEICHOIC ACID TRANSFERASE TAGU"/>
    <property type="match status" value="1"/>
</dbReference>
<dbReference type="Pfam" id="PF03816">
    <property type="entry name" value="LytR_cpsA_psr"/>
    <property type="match status" value="1"/>
</dbReference>
<keyword id="KW-0002">3D-structure</keyword>
<keyword id="KW-1003">Cell membrane</keyword>
<keyword id="KW-0961">Cell wall biogenesis/degradation</keyword>
<keyword id="KW-0472">Membrane</keyword>
<keyword id="KW-1185">Reference proteome</keyword>
<keyword id="KW-0735">Signal-anchor</keyword>
<keyword id="KW-0808">Transferase</keyword>
<keyword id="KW-0812">Transmembrane</keyword>
<keyword id="KW-1133">Transmembrane helix</keyword>
<evidence type="ECO:0000255" key="1"/>
<evidence type="ECO:0000269" key="2">
    <source>
    </source>
</evidence>
<evidence type="ECO:0000303" key="3">
    <source>
    </source>
</evidence>
<evidence type="ECO:0000305" key="4"/>
<evidence type="ECO:0007744" key="5">
    <source>
        <dbReference type="PDB" id="3MEJ"/>
    </source>
</evidence>
<evidence type="ECO:0007744" key="6">
    <source>
        <dbReference type="PDB" id="4DE9"/>
    </source>
</evidence>
<evidence type="ECO:0007829" key="7">
    <source>
        <dbReference type="PDB" id="6MPS"/>
    </source>
</evidence>
<evidence type="ECO:0007829" key="8">
    <source>
        <dbReference type="PDB" id="6MPT"/>
    </source>
</evidence>
<comment type="function">
    <text evidence="2">May catalyze the final step in cell wall teichoic acid biosynthesis, the transfer of the anionic cell wall polymers (APs) from their lipid-linked precursor to the cell wall peptidoglycan (PG).</text>
</comment>
<comment type="pathway">
    <text evidence="2">Cell wall biogenesis.</text>
</comment>
<comment type="subunit">
    <text evidence="2">Interacts with MreB.</text>
</comment>
<comment type="subcellular location">
    <subcellularLocation>
        <location evidence="4">Cell membrane</location>
        <topology evidence="1 4">Single-pass type II membrane protein</topology>
    </subcellularLocation>
</comment>
<comment type="disruption phenotype">
    <text evidence="2">Single mutant has no effect on cell growth or morphology under normal growth conditions. Triple disruption of tagTUV genes is not viable.</text>
</comment>
<comment type="similarity">
    <text evidence="4">Belongs to the LytR/CpsA/Psr (LCP) family.</text>
</comment>